<evidence type="ECO:0000250" key="1"/>
<evidence type="ECO:0000305" key="2"/>
<name>GUAC_BUCBP</name>
<protein>
    <recommendedName>
        <fullName>GMP reductase</fullName>
        <ecNumber>1.7.1.7</ecNumber>
    </recommendedName>
    <alternativeName>
        <fullName>Guanosine 5'-monophosphate oxidoreductase</fullName>
        <shortName>Guanosine monophosphate reductase</shortName>
    </alternativeName>
</protein>
<sequence>MRIEEDIKLGFKDVLIRPKRSILKSRSQVDLTRLFIFKHAQNKWSGIPLIAANMDTVGTFKMAIALSSFGILTAIHKYYSYLDWKKFIHTIPGTVVKHIMVSTGMLDEDFVKLKQILSLSSKLKYICIDVANGYSEKFVTFLKKVRECYCDKIICAGNVVTGEMVEELILSGADIVKVGIGPGSVCTTRAKTAIGYPQLSAVIECSDAAHGLGGQIISDGGCVVSGDIAKAFGGGADFVMLGGMLAGHKECEGLIFKENKKRYMIFYGMSSKFAMDRHIGGVARYKTPEGKTVKVLFRGAVSETINNILGGLRSTCTYVGAFTLKELTKRTTFIKVSEQENIIFNNQEVSN</sequence>
<dbReference type="EC" id="1.7.1.7"/>
<dbReference type="EMBL" id="AE016826">
    <property type="protein sequence ID" value="AAO26920.1"/>
    <property type="molecule type" value="Genomic_DNA"/>
</dbReference>
<dbReference type="RefSeq" id="WP_011091321.1">
    <property type="nucleotide sequence ID" value="NC_004545.1"/>
</dbReference>
<dbReference type="SMR" id="P59443"/>
<dbReference type="STRING" id="224915.bbp_188"/>
<dbReference type="KEGG" id="bab:bbp_188"/>
<dbReference type="eggNOG" id="COG0516">
    <property type="taxonomic scope" value="Bacteria"/>
</dbReference>
<dbReference type="HOGENOM" id="CLU_022552_5_3_6"/>
<dbReference type="OrthoDB" id="9805398at2"/>
<dbReference type="Proteomes" id="UP000000601">
    <property type="component" value="Chromosome"/>
</dbReference>
<dbReference type="GO" id="GO:0005829">
    <property type="term" value="C:cytosol"/>
    <property type="evidence" value="ECO:0007669"/>
    <property type="project" value="TreeGrafter"/>
</dbReference>
<dbReference type="GO" id="GO:1902560">
    <property type="term" value="C:GMP reductase complex"/>
    <property type="evidence" value="ECO:0007669"/>
    <property type="project" value="InterPro"/>
</dbReference>
<dbReference type="GO" id="GO:0003920">
    <property type="term" value="F:GMP reductase activity"/>
    <property type="evidence" value="ECO:0007669"/>
    <property type="project" value="UniProtKB-UniRule"/>
</dbReference>
<dbReference type="GO" id="GO:0046872">
    <property type="term" value="F:metal ion binding"/>
    <property type="evidence" value="ECO:0007669"/>
    <property type="project" value="UniProtKB-KW"/>
</dbReference>
<dbReference type="GO" id="GO:0006163">
    <property type="term" value="P:purine nucleotide metabolic process"/>
    <property type="evidence" value="ECO:0007669"/>
    <property type="project" value="UniProtKB-UniRule"/>
</dbReference>
<dbReference type="CDD" id="cd00381">
    <property type="entry name" value="IMPDH"/>
    <property type="match status" value="1"/>
</dbReference>
<dbReference type="FunFam" id="3.20.20.70:FF:000012">
    <property type="entry name" value="GMP reductase"/>
    <property type="match status" value="1"/>
</dbReference>
<dbReference type="Gene3D" id="3.20.20.70">
    <property type="entry name" value="Aldolase class I"/>
    <property type="match status" value="1"/>
</dbReference>
<dbReference type="HAMAP" id="MF_00596">
    <property type="entry name" value="GMP_reduct_type1"/>
    <property type="match status" value="1"/>
</dbReference>
<dbReference type="InterPro" id="IPR013785">
    <property type="entry name" value="Aldolase_TIM"/>
</dbReference>
<dbReference type="InterPro" id="IPR050139">
    <property type="entry name" value="GMP_reductase"/>
</dbReference>
<dbReference type="InterPro" id="IPR005993">
    <property type="entry name" value="GMPR"/>
</dbReference>
<dbReference type="InterPro" id="IPR015875">
    <property type="entry name" value="IMP_DH/GMP_Rdtase_CS"/>
</dbReference>
<dbReference type="InterPro" id="IPR001093">
    <property type="entry name" value="IMP_DH_GMPRt"/>
</dbReference>
<dbReference type="NCBIfam" id="TIGR01305">
    <property type="entry name" value="GMP_reduct_1"/>
    <property type="match status" value="1"/>
</dbReference>
<dbReference type="NCBIfam" id="NF003470">
    <property type="entry name" value="PRK05096.1"/>
    <property type="match status" value="1"/>
</dbReference>
<dbReference type="PANTHER" id="PTHR43170">
    <property type="entry name" value="GMP REDUCTASE"/>
    <property type="match status" value="1"/>
</dbReference>
<dbReference type="PANTHER" id="PTHR43170:SF5">
    <property type="entry name" value="GMP REDUCTASE"/>
    <property type="match status" value="1"/>
</dbReference>
<dbReference type="Pfam" id="PF00478">
    <property type="entry name" value="IMPDH"/>
    <property type="match status" value="1"/>
</dbReference>
<dbReference type="PIRSF" id="PIRSF000235">
    <property type="entry name" value="GMP_reductase"/>
    <property type="match status" value="1"/>
</dbReference>
<dbReference type="SMART" id="SM01240">
    <property type="entry name" value="IMPDH"/>
    <property type="match status" value="1"/>
</dbReference>
<dbReference type="SUPFAM" id="SSF51412">
    <property type="entry name" value="Inosine monophosphate dehydrogenase (IMPDH)"/>
    <property type="match status" value="1"/>
</dbReference>
<dbReference type="PROSITE" id="PS00487">
    <property type="entry name" value="IMP_DH_GMP_RED"/>
    <property type="match status" value="1"/>
</dbReference>
<feature type="chain" id="PRO_0000093734" description="GMP reductase">
    <location>
        <begin position="1"/>
        <end position="351"/>
    </location>
</feature>
<feature type="active site" description="Thioimidate intermediate" evidence="1">
    <location>
        <position position="186"/>
    </location>
</feature>
<feature type="binding site" evidence="1">
    <location>
        <begin position="108"/>
        <end position="131"/>
    </location>
    <ligand>
        <name>NADP(+)</name>
        <dbReference type="ChEBI" id="CHEBI:58349"/>
    </ligand>
</feature>
<feature type="binding site" evidence="1">
    <location>
        <position position="181"/>
    </location>
    <ligand>
        <name>K(+)</name>
        <dbReference type="ChEBI" id="CHEBI:29103"/>
    </ligand>
</feature>
<feature type="binding site" evidence="1">
    <location>
        <position position="183"/>
    </location>
    <ligand>
        <name>K(+)</name>
        <dbReference type="ChEBI" id="CHEBI:29103"/>
    </ligand>
</feature>
<feature type="binding site" evidence="1">
    <location>
        <begin position="216"/>
        <end position="239"/>
    </location>
    <ligand>
        <name>NADP(+)</name>
        <dbReference type="ChEBI" id="CHEBI:58349"/>
    </ligand>
</feature>
<reference key="1">
    <citation type="journal article" date="2003" name="Proc. Natl. Acad. Sci. U.S.A.">
        <title>Reductive genome evolution in Buchnera aphidicola.</title>
        <authorList>
            <person name="van Ham R.C.H.J."/>
            <person name="Kamerbeek J."/>
            <person name="Palacios C."/>
            <person name="Rausell C."/>
            <person name="Abascal F."/>
            <person name="Bastolla U."/>
            <person name="Fernandez J.M."/>
            <person name="Jimenez L."/>
            <person name="Postigo M."/>
            <person name="Silva F.J."/>
            <person name="Tamames J."/>
            <person name="Viguera E."/>
            <person name="Latorre A."/>
            <person name="Valencia A."/>
            <person name="Moran F."/>
            <person name="Moya A."/>
        </authorList>
    </citation>
    <scope>NUCLEOTIDE SEQUENCE [LARGE SCALE GENOMIC DNA]</scope>
    <source>
        <strain>Bp</strain>
    </source>
</reference>
<organism>
    <name type="scientific">Buchnera aphidicola subsp. Baizongia pistaciae (strain Bp)</name>
    <dbReference type="NCBI Taxonomy" id="224915"/>
    <lineage>
        <taxon>Bacteria</taxon>
        <taxon>Pseudomonadati</taxon>
        <taxon>Pseudomonadota</taxon>
        <taxon>Gammaproteobacteria</taxon>
        <taxon>Enterobacterales</taxon>
        <taxon>Erwiniaceae</taxon>
        <taxon>Buchnera</taxon>
    </lineage>
</organism>
<comment type="function">
    <text evidence="1">Catalyzes the irreversible NADPH-dependent deamination of GMP to IMP. It functions in the conversion of nucleobase, nucleoside and nucleotide derivatives of G to A nucleotides, and in maintaining the intracellular balance of A and G nucleotides (By similarity).</text>
</comment>
<comment type="catalytic activity">
    <reaction>
        <text>IMP + NH4(+) + NADP(+) = GMP + NADPH + 2 H(+)</text>
        <dbReference type="Rhea" id="RHEA:17185"/>
        <dbReference type="ChEBI" id="CHEBI:15378"/>
        <dbReference type="ChEBI" id="CHEBI:28938"/>
        <dbReference type="ChEBI" id="CHEBI:57783"/>
        <dbReference type="ChEBI" id="CHEBI:58053"/>
        <dbReference type="ChEBI" id="CHEBI:58115"/>
        <dbReference type="ChEBI" id="CHEBI:58349"/>
        <dbReference type="EC" id="1.7.1.7"/>
    </reaction>
</comment>
<comment type="subunit">
    <text evidence="1">Homotetramer.</text>
</comment>
<comment type="similarity">
    <text evidence="2">Belongs to the IMPDH/GMPR family. GuaC type 1 subfamily.</text>
</comment>
<gene>
    <name type="primary">guaC</name>
    <name type="ordered locus">bbp_188</name>
</gene>
<proteinExistence type="inferred from homology"/>
<accession>P59443</accession>
<keyword id="KW-0479">Metal-binding</keyword>
<keyword id="KW-0521">NADP</keyword>
<keyword id="KW-0560">Oxidoreductase</keyword>
<keyword id="KW-0630">Potassium</keyword>
<keyword id="KW-1185">Reference proteome</keyword>